<comment type="function">
    <text evidence="1">Pasteurella leukotoxins are exotoxins that attack host leukocytes and especially polymorphonuclear cells, by causing cell rupture. The leukotoxin binds to the host LFA-1 integrin and induces a signaling cascade leading to many biological effects, including tyrosine phosphorylation of the CD18 tail, elevation of the intracellular Ca(2+) and lysis of the host cell (By similarity). This leukotoxin is a major contributor to the pathogenesis of lung injury in ovine pneumonic pasteurellosis. It also has weak hemolytic activity.</text>
</comment>
<comment type="subcellular location">
    <subcellularLocation>
        <location evidence="1">Secreted</location>
    </subcellularLocation>
    <subcellularLocation>
        <location evidence="1">Host cell membrane</location>
        <topology evidence="1">Multi-pass membrane protein</topology>
    </subcellularLocation>
</comment>
<comment type="domain">
    <text evidence="1">The transmembrane domains are believed to be involved in pore formation in target cells.</text>
</comment>
<comment type="domain">
    <text evidence="1">The Gly-rich region is probably involved in calcium binding, which is required for target cell-binding and cytolytic activity.</text>
</comment>
<comment type="domain">
    <text evidence="1">The C-terminal domain contains an export signal that is recognized by the ABC transporter complex LktBD.</text>
</comment>
<comment type="PTM">
    <text evidence="1">Acylated by LktC. The toxin only becomes active when modified (By similarity).</text>
</comment>
<comment type="miscellaneous">
    <text>The lktCABD operon has a complex mosaic structure that has been derived by extensive inter- and intraspecies horizontal DNA transfer and intragenic recombination events.</text>
</comment>
<comment type="similarity">
    <text evidence="3">Belongs to the RTX prokaryotic toxin (TC 1.C.11) family.</text>
</comment>
<name>LKA2E_MANHA</name>
<accession>Q9EV27</accession>
<accession>Q9EV28</accession>
<gene>
    <name type="primary">lktA</name>
</gene>
<organism>
    <name type="scientific">Mannheimia haemolytica</name>
    <name type="common">Pasteurella haemolytica</name>
    <dbReference type="NCBI Taxonomy" id="75985"/>
    <lineage>
        <taxon>Bacteria</taxon>
        <taxon>Pseudomonadati</taxon>
        <taxon>Pseudomonadota</taxon>
        <taxon>Gammaproteobacteria</taxon>
        <taxon>Pasteurellales</taxon>
        <taxon>Pasteurellaceae</taxon>
        <taxon>Mannheimia</taxon>
    </lineage>
</organism>
<reference key="1">
    <citation type="journal article" date="2001" name="J. Bacteriol.">
        <title>Sequence diversity and molecular evolution of the leukotoxin (lktA) gene in bovine and ovine strains of Mannheimia (Pasteurella) haemolytica.</title>
        <authorList>
            <person name="Davies R.L."/>
            <person name="Whittam T.S."/>
            <person name="Selander R.K."/>
        </authorList>
    </citation>
    <scope>NUCLEOTIDE SEQUENCE [GENOMIC DNA]</scope>
    <source>
        <strain>Serotype A2 / PH292</strain>
        <strain>Serotype A2 / PH392</strain>
    </source>
</reference>
<sequence length="953" mass="102218">MGNKLTNISTNLKSSWLTAKSGLNRTGQSLAKAGQSLKTGAKKIILYIPKDYQYDTDKGNGLQDLVKAAEELGIEVQKEESNDIAKAQTSLGTIHNVLGLTERGIVLSAPQLDKLLQKTKVGQAIGSTENITKGFSNAKTVLSGIQSILGSVLAGMDLDEALQNNSNELTLAKAGLELTNSLIENIANSVKTLDAFGDQINQLGSKLQNVKGLSSLGEKLKGLSGFDKTSLGLDIVSGLLSGATAALVLADKNASTSRKVGAGFELANQVVGNITKAVSSYILAQRVAAGLSSTGPVAALIASTVSLAISPLSFAGIADKFNHAKSLESYAERFKKLGYDGDNLLAEYQRGTGTIDASVTAINTALAAIAGGVSAAAAGSVVASPIALLVSGITGVISTILQYSKQAMFEHVANKIHNKIVEWEKNNPGKNYFENGYDARYLANLQDNMKFLLNLNKELQAERVIAITQQQWDNNIGDLAGISRLGEKVLSGKAYVDAFEEGQHLKADKLVQLDSAKGIIDVSNTGEAKTQHILFRTPLLTPGTEKRERVQTGKYEYITKLHINRVDSWKITDGAASSTFDLTNVVQRIGIELDNAGNVTKTKETKIIAKLGEGDDNVFVGSGTTEIDGGEGYDRVHYSRGNYGALTIDATKETEQGSYTVNRFVESGKALHEVTSTHTALVGNREEKIEYRHSNNQHHAGYYTKDTLKAVEEIIGTSHNDIFKGSKFNDAFNGGDGVDTIDGNDGNDRLFGGKGDDIIDGGNGDDFIDGGKGNDLLHGGKGDDIFVHRQGDGNDSITESEGNDKLSFSDSNLKDLTFEKVNHHLVITNTKQEKVTIQNWFREAEFAKTIQNYVATRDDKIEEIIGQNGERITSKQVDELIEKGNGKIAQSELTKVVDNYQLLKYSRDASNSLDKLISSASAFTSSNDSRNVLASPTSMLDPSLSSIQFARAA</sequence>
<proteinExistence type="inferred from homology"/>
<protein>
    <recommendedName>
        <fullName>Leukotoxin</fullName>
        <shortName>Lkt</shortName>
    </recommendedName>
</protein>
<keyword id="KW-0106">Calcium</keyword>
<keyword id="KW-0204">Cytolysis</keyword>
<keyword id="KW-0354">Hemolysis</keyword>
<keyword id="KW-1032">Host cell membrane</keyword>
<keyword id="KW-1043">Host membrane</keyword>
<keyword id="KW-0449">Lipoprotein</keyword>
<keyword id="KW-0472">Membrane</keyword>
<keyword id="KW-0677">Repeat</keyword>
<keyword id="KW-0964">Secreted</keyword>
<keyword id="KW-0800">Toxin</keyword>
<keyword id="KW-0812">Transmembrane</keyword>
<keyword id="KW-1133">Transmembrane helix</keyword>
<keyword id="KW-0843">Virulence</keyword>
<dbReference type="EMBL" id="AF314515">
    <property type="protein sequence ID" value="AAG40299.1"/>
    <property type="molecule type" value="Genomic_DNA"/>
</dbReference>
<dbReference type="EMBL" id="AF314516">
    <property type="protein sequence ID" value="AAG40300.1"/>
    <property type="molecule type" value="Genomic_DNA"/>
</dbReference>
<dbReference type="RefSeq" id="WP_061888577.1">
    <property type="nucleotide sequence ID" value="NZ_CP017484.1"/>
</dbReference>
<dbReference type="SMR" id="Q9EV27"/>
<dbReference type="GO" id="GO:0005576">
    <property type="term" value="C:extracellular region"/>
    <property type="evidence" value="ECO:0007669"/>
    <property type="project" value="UniProtKB-SubCell"/>
</dbReference>
<dbReference type="GO" id="GO:0020002">
    <property type="term" value="C:host cell plasma membrane"/>
    <property type="evidence" value="ECO:0007669"/>
    <property type="project" value="UniProtKB-SubCell"/>
</dbReference>
<dbReference type="GO" id="GO:0016020">
    <property type="term" value="C:membrane"/>
    <property type="evidence" value="ECO:0007669"/>
    <property type="project" value="UniProtKB-KW"/>
</dbReference>
<dbReference type="GO" id="GO:0005509">
    <property type="term" value="F:calcium ion binding"/>
    <property type="evidence" value="ECO:0007669"/>
    <property type="project" value="InterPro"/>
</dbReference>
<dbReference type="GO" id="GO:0015267">
    <property type="term" value="F:channel activity"/>
    <property type="evidence" value="ECO:0007669"/>
    <property type="project" value="InterPro"/>
</dbReference>
<dbReference type="GO" id="GO:0090729">
    <property type="term" value="F:toxin activity"/>
    <property type="evidence" value="ECO:0007669"/>
    <property type="project" value="UniProtKB-KW"/>
</dbReference>
<dbReference type="GO" id="GO:0031640">
    <property type="term" value="P:killing of cells of another organism"/>
    <property type="evidence" value="ECO:0007669"/>
    <property type="project" value="UniProtKB-KW"/>
</dbReference>
<dbReference type="FunFam" id="2.150.10.10:FF:000002">
    <property type="entry name" value="Leukotoxin"/>
    <property type="match status" value="1"/>
</dbReference>
<dbReference type="Gene3D" id="2.150.10.10">
    <property type="entry name" value="Serralysin-like metalloprotease, C-terminal"/>
    <property type="match status" value="1"/>
</dbReference>
<dbReference type="InterPro" id="IPR018511">
    <property type="entry name" value="Hemolysin-typ_Ca-bd_CS"/>
</dbReference>
<dbReference type="InterPro" id="IPR001343">
    <property type="entry name" value="Hemolysn_Ca-bd"/>
</dbReference>
<dbReference type="InterPro" id="IPR013550">
    <property type="entry name" value="RTX_C"/>
</dbReference>
<dbReference type="InterPro" id="IPR018504">
    <property type="entry name" value="RTX_pore_form"/>
</dbReference>
<dbReference type="InterPro" id="IPR050557">
    <property type="entry name" value="RTX_toxin/Mannuronan_C5-epim"/>
</dbReference>
<dbReference type="InterPro" id="IPR003995">
    <property type="entry name" value="RTX_toxin_determinant-A"/>
</dbReference>
<dbReference type="InterPro" id="IPR011049">
    <property type="entry name" value="Serralysin-like_metalloprot_C"/>
</dbReference>
<dbReference type="NCBIfam" id="NF033943">
    <property type="entry name" value="RTX_toxin"/>
    <property type="match status" value="1"/>
</dbReference>
<dbReference type="PANTHER" id="PTHR38340">
    <property type="entry name" value="S-LAYER PROTEIN"/>
    <property type="match status" value="1"/>
</dbReference>
<dbReference type="PANTHER" id="PTHR38340:SF1">
    <property type="entry name" value="S-LAYER PROTEIN"/>
    <property type="match status" value="1"/>
</dbReference>
<dbReference type="Pfam" id="PF00353">
    <property type="entry name" value="HemolysinCabind"/>
    <property type="match status" value="2"/>
</dbReference>
<dbReference type="Pfam" id="PF02382">
    <property type="entry name" value="RTX"/>
    <property type="match status" value="1"/>
</dbReference>
<dbReference type="Pfam" id="PF08339">
    <property type="entry name" value="RTX_C"/>
    <property type="match status" value="1"/>
</dbReference>
<dbReference type="PRINTS" id="PR00313">
    <property type="entry name" value="CABNDNGRPT"/>
</dbReference>
<dbReference type="PRINTS" id="PR01488">
    <property type="entry name" value="RTXTOXINA"/>
</dbReference>
<dbReference type="SUPFAM" id="SSF51120">
    <property type="entry name" value="beta-Roll"/>
    <property type="match status" value="1"/>
</dbReference>
<dbReference type="PROSITE" id="PS00330">
    <property type="entry name" value="HEMOLYSIN_CALCIUM"/>
    <property type="match status" value="4"/>
</dbReference>
<feature type="chain" id="PRO_0000196225" description="Leukotoxin">
    <location>
        <begin position="1"/>
        <end position="953"/>
    </location>
</feature>
<feature type="transmembrane region" description="Helical" evidence="2">
    <location>
        <begin position="230"/>
        <end position="250"/>
    </location>
</feature>
<feature type="transmembrane region" description="Helical" evidence="2">
    <location>
        <begin position="297"/>
        <end position="317"/>
    </location>
</feature>
<feature type="transmembrane region" description="Helical" evidence="2">
    <location>
        <begin position="359"/>
        <end position="379"/>
    </location>
</feature>
<feature type="transmembrane region" description="Helical" evidence="2">
    <location>
        <begin position="381"/>
        <end position="401"/>
    </location>
</feature>
<feature type="repeat" description="Hemolysin-type calcium-binding 1">
    <location>
        <begin position="715"/>
        <end position="732"/>
    </location>
</feature>
<feature type="repeat" description="Hemolysin-type calcium-binding 2">
    <location>
        <begin position="733"/>
        <end position="750"/>
    </location>
</feature>
<feature type="repeat" description="Hemolysin-type calcium-binding 3">
    <location>
        <begin position="751"/>
        <end position="768"/>
    </location>
</feature>
<feature type="repeat" description="Hemolysin-type calcium-binding 4">
    <location>
        <begin position="769"/>
        <end position="786"/>
    </location>
</feature>
<feature type="repeat" description="Hemolysin-type calcium-binding 5">
    <location>
        <begin position="789"/>
        <end position="806"/>
    </location>
</feature>
<feature type="sequence variant" description="In strain: PH392.">
    <original>T</original>
    <variation>I</variation>
    <location>
        <position position="140"/>
    </location>
</feature>
<evidence type="ECO:0000250" key="1"/>
<evidence type="ECO:0000255" key="2"/>
<evidence type="ECO:0000305" key="3"/>